<proteinExistence type="inferred from homology"/>
<comment type="similarity">
    <text evidence="2">Belongs to the universal ribosomal protein uL15 family.</text>
</comment>
<dbReference type="EMBL" id="AC012187">
    <property type="protein sequence ID" value="AAF78501.1"/>
    <property type="molecule type" value="Genomic_DNA"/>
</dbReference>
<dbReference type="EMBL" id="CP002684">
    <property type="protein sequence ID" value="AEE28954.1"/>
    <property type="molecule type" value="Genomic_DNA"/>
</dbReference>
<dbReference type="PIR" id="E86263">
    <property type="entry name" value="E86263"/>
</dbReference>
<dbReference type="RefSeq" id="NP_172756.1">
    <property type="nucleotide sequence ID" value="NM_101167.1"/>
</dbReference>
<dbReference type="SMR" id="Q9LPV3"/>
<dbReference type="BioGRID" id="23094">
    <property type="interactions" value="4"/>
</dbReference>
<dbReference type="STRING" id="3702.Q9LPV3"/>
<dbReference type="PaxDb" id="3702-AT1G12960.1"/>
<dbReference type="EnsemblPlants" id="AT1G12960.1">
    <property type="protein sequence ID" value="AT1G12960.1"/>
    <property type="gene ID" value="AT1G12960"/>
</dbReference>
<dbReference type="GeneID" id="837854"/>
<dbReference type="Gramene" id="AT1G12960.1">
    <property type="protein sequence ID" value="AT1G12960.1"/>
    <property type="gene ID" value="AT1G12960"/>
</dbReference>
<dbReference type="KEGG" id="ath:AT1G12960"/>
<dbReference type="Araport" id="AT1G12960"/>
<dbReference type="TAIR" id="AT1G12960"/>
<dbReference type="eggNOG" id="KOG1742">
    <property type="taxonomic scope" value="Eukaryota"/>
</dbReference>
<dbReference type="HOGENOM" id="CLU_109163_2_0_1"/>
<dbReference type="InParanoid" id="Q9LPV3"/>
<dbReference type="OMA" id="GMRHHHL"/>
<dbReference type="OrthoDB" id="1030518at2759"/>
<dbReference type="PhylomeDB" id="Q9LPV3"/>
<dbReference type="PRO" id="PR:Q9LPV3"/>
<dbReference type="Proteomes" id="UP000006548">
    <property type="component" value="Chromosome 1"/>
</dbReference>
<dbReference type="ExpressionAtlas" id="Q9LPV3">
    <property type="expression patterns" value="baseline and differential"/>
</dbReference>
<dbReference type="GO" id="GO:0022625">
    <property type="term" value="C:cytosolic large ribosomal subunit"/>
    <property type="evidence" value="ECO:0007005"/>
    <property type="project" value="TAIR"/>
</dbReference>
<dbReference type="GO" id="GO:0003735">
    <property type="term" value="F:structural constituent of ribosome"/>
    <property type="evidence" value="ECO:0000314"/>
    <property type="project" value="CAFA"/>
</dbReference>
<dbReference type="FunFam" id="3.100.10.10:FF:000037">
    <property type="match status" value="1"/>
</dbReference>
<dbReference type="Gene3D" id="3.100.10.10">
    <property type="match status" value="2"/>
</dbReference>
<dbReference type="InterPro" id="IPR036227">
    <property type="entry name" value="Ribosomal_uL15/eL18_sf"/>
</dbReference>
<dbReference type="PANTHER" id="PTHR11721">
    <property type="entry name" value="60S RIBOSOMAL PROTEIN L27A"/>
    <property type="match status" value="1"/>
</dbReference>
<dbReference type="PANTHER" id="PTHR11721:SF3">
    <property type="entry name" value="LARGE RIBOSOMAL SUBUNIT PROTEIN UL15"/>
    <property type="match status" value="1"/>
</dbReference>
<dbReference type="SUPFAM" id="SSF52080">
    <property type="entry name" value="Ribosomal proteins L15p and L18e"/>
    <property type="match status" value="1"/>
</dbReference>
<sequence length="104" mass="11814">MTTSRKKTRNLREHVSVGHGRFGKHRKLPGSRGNAGVGMRYFHKLRNKFYCQIVNLDKLWSMVLGKGFLPENKPVVVKAKLVSNTDEKKIKEAGSAVVLTFLLY</sequence>
<gene>
    <name type="primary">RPL27AA</name>
    <name type="ordered locus">At1g12960</name>
    <name type="ORF">F13K23.22</name>
</gene>
<keyword id="KW-1185">Reference proteome</keyword>
<keyword id="KW-0687">Ribonucleoprotein</keyword>
<keyword id="KW-0689">Ribosomal protein</keyword>
<protein>
    <recommendedName>
        <fullName evidence="1">Large ribosomal subunit protein uL15z</fullName>
    </recommendedName>
    <alternativeName>
        <fullName>60S ribosomal protein L27a-1</fullName>
    </alternativeName>
</protein>
<organism>
    <name type="scientific">Arabidopsis thaliana</name>
    <name type="common">Mouse-ear cress</name>
    <dbReference type="NCBI Taxonomy" id="3702"/>
    <lineage>
        <taxon>Eukaryota</taxon>
        <taxon>Viridiplantae</taxon>
        <taxon>Streptophyta</taxon>
        <taxon>Embryophyta</taxon>
        <taxon>Tracheophyta</taxon>
        <taxon>Spermatophyta</taxon>
        <taxon>Magnoliopsida</taxon>
        <taxon>eudicotyledons</taxon>
        <taxon>Gunneridae</taxon>
        <taxon>Pentapetalae</taxon>
        <taxon>rosids</taxon>
        <taxon>malvids</taxon>
        <taxon>Brassicales</taxon>
        <taxon>Brassicaceae</taxon>
        <taxon>Camelineae</taxon>
        <taxon>Arabidopsis</taxon>
    </lineage>
</organism>
<name>R27A1_ARATH</name>
<reference key="1">
    <citation type="journal article" date="2000" name="Nature">
        <title>Sequence and analysis of chromosome 1 of the plant Arabidopsis thaliana.</title>
        <authorList>
            <person name="Theologis A."/>
            <person name="Ecker J.R."/>
            <person name="Palm C.J."/>
            <person name="Federspiel N.A."/>
            <person name="Kaul S."/>
            <person name="White O."/>
            <person name="Alonso J."/>
            <person name="Altafi H."/>
            <person name="Araujo R."/>
            <person name="Bowman C.L."/>
            <person name="Brooks S.Y."/>
            <person name="Buehler E."/>
            <person name="Chan A."/>
            <person name="Chao Q."/>
            <person name="Chen H."/>
            <person name="Cheuk R.F."/>
            <person name="Chin C.W."/>
            <person name="Chung M.K."/>
            <person name="Conn L."/>
            <person name="Conway A.B."/>
            <person name="Conway A.R."/>
            <person name="Creasy T.H."/>
            <person name="Dewar K."/>
            <person name="Dunn P."/>
            <person name="Etgu P."/>
            <person name="Feldblyum T.V."/>
            <person name="Feng J.-D."/>
            <person name="Fong B."/>
            <person name="Fujii C.Y."/>
            <person name="Gill J.E."/>
            <person name="Goldsmith A.D."/>
            <person name="Haas B."/>
            <person name="Hansen N.F."/>
            <person name="Hughes B."/>
            <person name="Huizar L."/>
            <person name="Hunter J.L."/>
            <person name="Jenkins J."/>
            <person name="Johnson-Hopson C."/>
            <person name="Khan S."/>
            <person name="Khaykin E."/>
            <person name="Kim C.J."/>
            <person name="Koo H.L."/>
            <person name="Kremenetskaia I."/>
            <person name="Kurtz D.B."/>
            <person name="Kwan A."/>
            <person name="Lam B."/>
            <person name="Langin-Hooper S."/>
            <person name="Lee A."/>
            <person name="Lee J.M."/>
            <person name="Lenz C.A."/>
            <person name="Li J.H."/>
            <person name="Li Y.-P."/>
            <person name="Lin X."/>
            <person name="Liu S.X."/>
            <person name="Liu Z.A."/>
            <person name="Luros J.S."/>
            <person name="Maiti R."/>
            <person name="Marziali A."/>
            <person name="Militscher J."/>
            <person name="Miranda M."/>
            <person name="Nguyen M."/>
            <person name="Nierman W.C."/>
            <person name="Osborne B.I."/>
            <person name="Pai G."/>
            <person name="Peterson J."/>
            <person name="Pham P.K."/>
            <person name="Rizzo M."/>
            <person name="Rooney T."/>
            <person name="Rowley D."/>
            <person name="Sakano H."/>
            <person name="Salzberg S.L."/>
            <person name="Schwartz J.R."/>
            <person name="Shinn P."/>
            <person name="Southwick A.M."/>
            <person name="Sun H."/>
            <person name="Tallon L.J."/>
            <person name="Tambunga G."/>
            <person name="Toriumi M.J."/>
            <person name="Town C.D."/>
            <person name="Utterback T."/>
            <person name="Van Aken S."/>
            <person name="Vaysberg M."/>
            <person name="Vysotskaia V.S."/>
            <person name="Walker M."/>
            <person name="Wu D."/>
            <person name="Yu G."/>
            <person name="Fraser C.M."/>
            <person name="Venter J.C."/>
            <person name="Davis R.W."/>
        </authorList>
    </citation>
    <scope>NUCLEOTIDE SEQUENCE [LARGE SCALE GENOMIC DNA]</scope>
    <source>
        <strain>cv. Columbia</strain>
    </source>
</reference>
<reference key="2">
    <citation type="journal article" date="2017" name="Plant J.">
        <title>Araport11: a complete reannotation of the Arabidopsis thaliana reference genome.</title>
        <authorList>
            <person name="Cheng C.Y."/>
            <person name="Krishnakumar V."/>
            <person name="Chan A.P."/>
            <person name="Thibaud-Nissen F."/>
            <person name="Schobel S."/>
            <person name="Town C.D."/>
        </authorList>
    </citation>
    <scope>GENOME REANNOTATION</scope>
    <source>
        <strain>cv. Columbia</strain>
    </source>
</reference>
<reference key="3">
    <citation type="journal article" date="2001" name="Plant Physiol.">
        <title>The organization of cytoplasmic ribosomal protein genes in the Arabidopsis genome.</title>
        <authorList>
            <person name="Barakat A."/>
            <person name="Szick-Miranda K."/>
            <person name="Chang I.-F."/>
            <person name="Guyot R."/>
            <person name="Blanc G."/>
            <person name="Cooke R."/>
            <person name="Delseny M."/>
            <person name="Bailey-Serres J."/>
        </authorList>
    </citation>
    <scope>GENE FAMILY ORGANIZATION</scope>
    <scope>NOMENCLATURE</scope>
</reference>
<reference key="4">
    <citation type="journal article" date="2023" name="Plant Cell">
        <title>An updated nomenclature for plant ribosomal protein genes.</title>
        <authorList>
            <person name="Scarpin M.R."/>
            <person name="Busche M."/>
            <person name="Martinez R.E."/>
            <person name="Harper L.C."/>
            <person name="Reiser L."/>
            <person name="Szakonyi D."/>
            <person name="Merchante C."/>
            <person name="Lan T."/>
            <person name="Xiong W."/>
            <person name="Mo B."/>
            <person name="Tang G."/>
            <person name="Chen X."/>
            <person name="Bailey-Serres J."/>
            <person name="Browning K.S."/>
            <person name="Brunkard J.O."/>
        </authorList>
    </citation>
    <scope>NOMENCLATURE</scope>
</reference>
<feature type="chain" id="PRO_0000244742" description="Large ribosomal subunit protein uL15z">
    <location>
        <begin position="1"/>
        <end position="104"/>
    </location>
</feature>
<evidence type="ECO:0000303" key="1">
    <source>
    </source>
</evidence>
<evidence type="ECO:0000305" key="2"/>
<accession>Q9LPV3</accession>